<protein>
    <recommendedName>
        <fullName evidence="10">Salicylate synthase</fullName>
    </recommendedName>
    <alternativeName>
        <fullName evidence="11">Chorismate mutase</fullName>
        <shortName evidence="11">CM</shortName>
        <ecNumber evidence="5">5.4.99.5</ecNumber>
    </alternativeName>
    <alternativeName>
        <fullName evidence="12">Isochorismate synthase/isochorismate lyase</fullName>
        <ecNumber evidence="4 5 7">4.2.99.21</ecNumber>
        <ecNumber evidence="4 5 7">5.4.4.2</ecNumber>
    </alternativeName>
    <alternativeName>
        <fullName evidence="14">Mycobactin synthase protein</fullName>
    </alternativeName>
</protein>
<keyword id="KW-0002">3D-structure</keyword>
<keyword id="KW-0413">Isomerase</keyword>
<keyword id="KW-0456">Lyase</keyword>
<keyword id="KW-0460">Magnesium</keyword>
<keyword id="KW-0479">Metal-binding</keyword>
<keyword id="KW-1185">Reference proteome</keyword>
<name>MBTI_MYCTU</name>
<accession>P9WFX1</accession>
<accession>L0T9G8</accession>
<accession>Q79FE7</accession>
<accession>Q7D785</accession>
<organism>
    <name type="scientific">Mycobacterium tuberculosis (strain ATCC 25618 / H37Rv)</name>
    <dbReference type="NCBI Taxonomy" id="83332"/>
    <lineage>
        <taxon>Bacteria</taxon>
        <taxon>Bacillati</taxon>
        <taxon>Actinomycetota</taxon>
        <taxon>Actinomycetes</taxon>
        <taxon>Mycobacteriales</taxon>
        <taxon>Mycobacteriaceae</taxon>
        <taxon>Mycobacterium</taxon>
        <taxon>Mycobacterium tuberculosis complex</taxon>
    </lineage>
</organism>
<comment type="function">
    <text evidence="4 5 6 7 9">Involved in the incorporation of salicylate into the virulence-conferring salicylate-based siderophore mycobactin. Catalyzes the initial conversion of chorismate to yield the intermediate isochorismate (isochorismate synthase activity), and the subsequent elimination of the enolpyruvyl side chain to give salicylate (isochorismate pyruvate-lyase activity). In the absence of magnesium, MbtI displays a chorismate mutase activity and converts chorismate to prephenate.</text>
</comment>
<comment type="catalytic activity">
    <reaction evidence="4 5 7">
        <text>chorismate = isochorismate</text>
        <dbReference type="Rhea" id="RHEA:18985"/>
        <dbReference type="ChEBI" id="CHEBI:29748"/>
        <dbReference type="ChEBI" id="CHEBI:29780"/>
        <dbReference type="EC" id="5.4.4.2"/>
    </reaction>
</comment>
<comment type="catalytic activity">
    <reaction evidence="4 5 7">
        <text>isochorismate = salicylate + pyruvate</text>
        <dbReference type="Rhea" id="RHEA:27874"/>
        <dbReference type="ChEBI" id="CHEBI:15361"/>
        <dbReference type="ChEBI" id="CHEBI:29780"/>
        <dbReference type="ChEBI" id="CHEBI:30762"/>
        <dbReference type="EC" id="4.2.99.21"/>
    </reaction>
</comment>
<comment type="catalytic activity">
    <reaction evidence="5">
        <text>chorismate = prephenate</text>
        <dbReference type="Rhea" id="RHEA:13897"/>
        <dbReference type="ChEBI" id="CHEBI:29748"/>
        <dbReference type="ChEBI" id="CHEBI:29934"/>
        <dbReference type="EC" id="5.4.99.5"/>
    </reaction>
</comment>
<comment type="cofactor">
    <cofactor evidence="4 5 7">
        <name>Mg(2+)</name>
        <dbReference type="ChEBI" id="CHEBI:18420"/>
    </cofactor>
</comment>
<comment type="activity regulation">
    <text evidence="7 8">Inhibited by (E)-3-(1-carboxyprop-1-enyloxy)-2-hydroxybenzoic acid (AMT), 3-(1-carboxy-2-phenylvinyloxy)-2-hydroxybenzoic acid (phenyl-AMT), 3-(1-carboxy-3-methylbut-1-enyloxy)-2-hydroxybenzoic acid, 3-(1-carboxybut-1-enyloxy)-2-hydroxybenzoic acid (ethyl-AMT), 3-(1-carboxyprop-1-enyloxy)-2-hydroxybenzoic acid (methyl-AMT), 3-(1-carboxy-2-cyclopropylethenyloxy)-2-hydroxybenzoic acid (cyclopropyl-AMT) and 3-(1-carboxy-3-methylbut-1-enyloxy)-2-hydroxybenzoic acid (isopropyl-AMT).</text>
</comment>
<comment type="biophysicochemical properties">
    <kinetics>
        <KM evidence="5">2.6 uM for isochorismate (for isochorismate pyruvate lyase activity at pH 8 and 37 degrees Celsius)</KM>
        <KM evidence="5">6 uM for isochorismate (for salicylate synthase activity at pH 8 and 37 degrees Celsius)</KM>
        <KM evidence="7">21 uM for isochorismate (for salicylate synthase activity at pH 8 and 25 degrees Celsius)</KM>
        <KM evidence="5">26 uM for chorismate (for chorismate mutase activity without magnesium at pH 7.5 and 37 degrees Celsius)</KM>
        <KM evidence="5">34 uM for chorismate (for isochorismate synthase activity at pH 7 and 37 degrees Celsius)</KM>
        <text evidence="5">kcat is 2.6 min(-1) for isochorismate pyruvate lyase activity (at pH 8 and 37 degrees Celsius). kcat is 2.8 min(-1) for salicylate synthase activity (at pH 8 and 37 degrees Celsius). kcat is 3.1 min(-1) for isochorismate synthase activity (at pH 7 and 37 degrees Celsius). kcat is 4.5 min(-1) for chorismate mutase activity (without magnesium at pH 7.5 and 37 degrees Celsius).</text>
    </kinetics>
    <phDependence>
        <text evidence="5">At pH below 7.5, MtbI produces isochorismate and at pH 8 it produces salicylate.</text>
    </phDependence>
</comment>
<comment type="pathway">
    <text evidence="14">Siderophore biosynthesis; mycobactin biosynthesis.</text>
</comment>
<comment type="subunit">
    <text evidence="3 4 5 7 8">Monomer.</text>
</comment>
<comment type="induction">
    <text evidence="2">Induced by iron starvation conditions and during infection of human THP-1 macrophages. Transcriptionally repressed by IdeR and iron.</text>
</comment>
<comment type="disruption phenotype">
    <text evidence="6">Cells lacking this gene display a reduction in salicylic acid biosynthesis and a drastic decrease in production of mycobactin compared with the wild-type strain.</text>
</comment>
<comment type="similarity">
    <text evidence="13">Belongs to the anthranilate synthase component I family. Salicylate synthase subfamily.</text>
</comment>
<feature type="chain" id="PRO_0000262086" description="Salicylate synthase">
    <location>
        <begin position="1"/>
        <end position="450"/>
    </location>
</feature>
<feature type="active site" description="Proton donor" evidence="1">
    <location>
        <position position="252"/>
    </location>
</feature>
<feature type="binding site" evidence="7 8">
    <location>
        <begin position="270"/>
        <end position="271"/>
    </location>
    <ligand>
        <name>substrate</name>
    </ligand>
</feature>
<feature type="binding site" evidence="7">
    <location>
        <position position="297"/>
    </location>
    <ligand>
        <name>Mg(2+)</name>
        <dbReference type="ChEBI" id="CHEBI:18420"/>
    </ligand>
</feature>
<feature type="binding site" evidence="4 7 8">
    <location>
        <position position="385"/>
    </location>
    <ligand>
        <name>substrate</name>
    </ligand>
</feature>
<feature type="binding site" evidence="4 7 8">
    <location>
        <position position="405"/>
    </location>
    <ligand>
        <name>substrate</name>
    </ligand>
</feature>
<feature type="binding site" evidence="4 7 8">
    <location>
        <begin position="419"/>
        <end position="421"/>
    </location>
    <ligand>
        <name>substrate</name>
    </ligand>
</feature>
<feature type="binding site" evidence="7">
    <location>
        <position position="431"/>
    </location>
    <ligand>
        <name>Mg(2+)</name>
        <dbReference type="ChEBI" id="CHEBI:18420"/>
    </ligand>
</feature>
<feature type="binding site" evidence="7">
    <location>
        <position position="434"/>
    </location>
    <ligand>
        <name>Mg(2+)</name>
        <dbReference type="ChEBI" id="CHEBI:18420"/>
    </ligand>
</feature>
<feature type="binding site" evidence="4 7 8">
    <location>
        <position position="438"/>
    </location>
    <ligand>
        <name>substrate</name>
    </ligand>
</feature>
<feature type="site" description="Could activate a water molecule for attack at the C2 of chorismate and involved in recognition/elimination of the C4 hydroxyl" evidence="5">
    <location>
        <position position="268"/>
    </location>
</feature>
<feature type="mutagenesis site" description="Only the chorismate mutase activity is observed." evidence="5">
    <original>K</original>
    <variation>A</variation>
    <location>
        <position position="205"/>
    </location>
</feature>
<feature type="mutagenesis site" description="No activity is observed." evidence="5">
    <original>E</original>
    <variation>Q</variation>
    <location>
        <position position="252"/>
    </location>
</feature>
<feature type="mutagenesis site" description="Only the chorismate mutase activity is observed." evidence="5">
    <original>L</original>
    <variation>A</variation>
    <location>
        <position position="268"/>
    </location>
</feature>
<feature type="mutagenesis site" description="Only the chorismate mutase activity is observed." evidence="5">
    <original>T</original>
    <variation>A</variation>
    <location>
        <position position="271"/>
    </location>
</feature>
<feature type="mutagenesis site" description="Only the chorismate mutase activity is observed." evidence="5">
    <original>H</original>
    <variation>M</variation>
    <location>
        <position position="334"/>
    </location>
</feature>
<feature type="mutagenesis site" description="Only the chorismate mutase activity is observed." evidence="5">
    <original>R</original>
    <variation>A</variation>
    <location>
        <position position="405"/>
    </location>
</feature>
<feature type="strand" evidence="15">
    <location>
        <begin position="1"/>
        <end position="5"/>
    </location>
</feature>
<feature type="turn" evidence="15">
    <location>
        <begin position="6"/>
        <end position="9"/>
    </location>
</feature>
<feature type="strand" evidence="15">
    <location>
        <begin position="10"/>
        <end position="14"/>
    </location>
</feature>
<feature type="strand" evidence="15">
    <location>
        <begin position="16"/>
        <end position="19"/>
    </location>
</feature>
<feature type="helix" evidence="15">
    <location>
        <begin position="26"/>
        <end position="41"/>
    </location>
</feature>
<feature type="strand" evidence="15">
    <location>
        <begin position="45"/>
        <end position="50"/>
    </location>
</feature>
<feature type="strand" evidence="15">
    <location>
        <begin position="53"/>
        <end position="67"/>
    </location>
</feature>
<feature type="strand" evidence="15">
    <location>
        <begin position="70"/>
        <end position="75"/>
    </location>
</feature>
<feature type="strand" evidence="15">
    <location>
        <begin position="78"/>
        <end position="82"/>
    </location>
</feature>
<feature type="helix" evidence="15">
    <location>
        <begin position="88"/>
        <end position="102"/>
    </location>
</feature>
<feature type="strand" evidence="15">
    <location>
        <begin position="104"/>
        <end position="110"/>
    </location>
</feature>
<feature type="helix" evidence="15">
    <location>
        <begin position="112"/>
        <end position="115"/>
    </location>
</feature>
<feature type="helix" evidence="15">
    <location>
        <begin position="117"/>
        <end position="119"/>
    </location>
</feature>
<feature type="helix" evidence="15">
    <location>
        <begin position="122"/>
        <end position="124"/>
    </location>
</feature>
<feature type="strand" evidence="15">
    <location>
        <begin position="130"/>
        <end position="143"/>
    </location>
</feature>
<feature type="strand" evidence="15">
    <location>
        <begin position="145"/>
        <end position="152"/>
    </location>
</feature>
<feature type="helix" evidence="15">
    <location>
        <begin position="155"/>
        <end position="167"/>
    </location>
</feature>
<feature type="helix" evidence="15">
    <location>
        <begin position="187"/>
        <end position="199"/>
    </location>
</feature>
<feature type="strand" evidence="15">
    <location>
        <begin position="204"/>
        <end position="213"/>
    </location>
</feature>
<feature type="helix" evidence="15">
    <location>
        <begin position="220"/>
        <end position="228"/>
    </location>
</feature>
<feature type="strand" evidence="15">
    <location>
        <begin position="234"/>
        <end position="241"/>
    </location>
</feature>
<feature type="strand" evidence="15">
    <location>
        <begin position="244"/>
        <end position="250"/>
    </location>
</feature>
<feature type="strand" evidence="15">
    <location>
        <begin position="252"/>
        <end position="257"/>
    </location>
</feature>
<feature type="strand" evidence="15">
    <location>
        <begin position="261"/>
        <end position="265"/>
    </location>
</feature>
<feature type="strand" evidence="15">
    <location>
        <begin position="268"/>
        <end position="273"/>
    </location>
</feature>
<feature type="helix" evidence="15">
    <location>
        <begin position="278"/>
        <end position="290"/>
    </location>
</feature>
<feature type="helix" evidence="15">
    <location>
        <begin position="292"/>
        <end position="310"/>
    </location>
</feature>
<feature type="strand" evidence="15">
    <location>
        <begin position="319"/>
        <end position="329"/>
    </location>
</feature>
<feature type="strand" evidence="15">
    <location>
        <begin position="332"/>
        <end position="343"/>
    </location>
</feature>
<feature type="helix" evidence="15">
    <location>
        <begin position="349"/>
        <end position="355"/>
    </location>
</feature>
<feature type="helix" evidence="15">
    <location>
        <begin position="360"/>
        <end position="362"/>
    </location>
</feature>
<feature type="strand" evidence="15">
    <location>
        <begin position="363"/>
        <end position="366"/>
    </location>
</feature>
<feature type="helix" evidence="15">
    <location>
        <begin position="367"/>
        <end position="377"/>
    </location>
</feature>
<feature type="turn" evidence="15">
    <location>
        <begin position="383"/>
        <end position="386"/>
    </location>
</feature>
<feature type="strand" evidence="15">
    <location>
        <begin position="387"/>
        <end position="393"/>
    </location>
</feature>
<feature type="strand" evidence="15">
    <location>
        <begin position="398"/>
        <end position="402"/>
    </location>
</feature>
<feature type="strand" evidence="15">
    <location>
        <begin position="405"/>
        <end position="410"/>
    </location>
</feature>
<feature type="strand" evidence="15">
    <location>
        <begin position="413"/>
        <end position="422"/>
    </location>
</feature>
<feature type="helix" evidence="15">
    <location>
        <begin position="428"/>
        <end position="439"/>
    </location>
</feature>
<feature type="turn" evidence="15">
    <location>
        <begin position="440"/>
        <end position="442"/>
    </location>
</feature>
<feature type="helix" evidence="15">
    <location>
        <begin position="443"/>
        <end position="445"/>
    </location>
</feature>
<sequence>MSELSVATGAVSTASSSIPMPAGVNPADLAAELAAVVTESVDEDYLLYECDGQWVLAAGVQAMVELDSDELRVIRDGVTRRQQWSGRPGAALGEAVDRLLLETDQAFGWVAFEFGVHRYGLQQRLAPHTPLARVFSPRTRIMVSEKEIRLFDAGIRHREAIDRLLATGVREVPQSRSVDVSDDPSGFRRRVAVAVDEIAAGRYHKVILSRCVEVPFAIDFPLTYRLGRRHNTPVRSFLLQLGGIRALGYSPELVTAVRADGVVITEPLAGTRALGRGPAIDRLARDDLESNSKEIVEHAISVRSSLEEITDIAEPGSAAVIDFMTVRERGSVQHLGSTIRARLDPSSDRMAALEALFPAVTASGIPKAAGVEAIFRLDECPRGLYSGAVVMLSADGGLDAALTLRAAYQVGGRTWLRAGAGIIEESEPEREFEETCEKLSTLTPYLVARQ</sequence>
<proteinExistence type="evidence at protein level"/>
<evidence type="ECO:0000250" key="1">
    <source>
        <dbReference type="UniProtKB" id="Q9X9I8"/>
    </source>
</evidence>
<evidence type="ECO:0000269" key="2">
    <source>
    </source>
</evidence>
<evidence type="ECO:0000269" key="3">
    <source>
    </source>
</evidence>
<evidence type="ECO:0000269" key="4">
    <source>
    </source>
</evidence>
<evidence type="ECO:0000269" key="5">
    <source>
    </source>
</evidence>
<evidence type="ECO:0000269" key="6">
    <source>
    </source>
</evidence>
<evidence type="ECO:0000269" key="7">
    <source>
    </source>
</evidence>
<evidence type="ECO:0000269" key="8">
    <source>
    </source>
</evidence>
<evidence type="ECO:0000269" key="9">
    <source>
    </source>
</evidence>
<evidence type="ECO:0000303" key="10">
    <source>
    </source>
</evidence>
<evidence type="ECO:0000303" key="11">
    <source>
    </source>
</evidence>
<evidence type="ECO:0000303" key="12">
    <source>
    </source>
</evidence>
<evidence type="ECO:0000305" key="13"/>
<evidence type="ECO:0000305" key="14">
    <source>
    </source>
</evidence>
<evidence type="ECO:0007829" key="15">
    <source>
        <dbReference type="PDB" id="3LOG"/>
    </source>
</evidence>
<gene>
    <name evidence="12" type="primary">mbtI</name>
    <name evidence="12" type="synonym">trpE2</name>
    <name type="ordered locus">Rv2386c</name>
</gene>
<dbReference type="EC" id="5.4.99.5" evidence="5"/>
<dbReference type="EC" id="4.2.99.21" evidence="4 5 7"/>
<dbReference type="EC" id="5.4.4.2" evidence="4 5 7"/>
<dbReference type="EMBL" id="AL123456">
    <property type="protein sequence ID" value="CCP45174.1"/>
    <property type="molecule type" value="Genomic_DNA"/>
</dbReference>
<dbReference type="RefSeq" id="WP_003412287.1">
    <property type="nucleotide sequence ID" value="NZ_NVQJ01000029.1"/>
</dbReference>
<dbReference type="RefSeq" id="YP_177877.1">
    <property type="nucleotide sequence ID" value="NC_000962.3"/>
</dbReference>
<dbReference type="PDB" id="2G5F">
    <property type="method" value="X-ray"/>
    <property type="resolution" value="1.80 A"/>
    <property type="chains" value="A/B/C/D=2-450"/>
</dbReference>
<dbReference type="PDB" id="2I6Y">
    <property type="method" value="X-ray"/>
    <property type="resolution" value="2.50 A"/>
    <property type="chains" value="A=2-450"/>
</dbReference>
<dbReference type="PDB" id="3LOG">
    <property type="method" value="X-ray"/>
    <property type="resolution" value="1.73 A"/>
    <property type="chains" value="A/B/C/D=1-449"/>
</dbReference>
<dbReference type="PDB" id="3RV6">
    <property type="method" value="X-ray"/>
    <property type="resolution" value="2.04 A"/>
    <property type="chains" value="A/B=2-450"/>
</dbReference>
<dbReference type="PDB" id="3RV7">
    <property type="method" value="X-ray"/>
    <property type="resolution" value="2.50 A"/>
    <property type="chains" value="A/B/C/D=2-450"/>
</dbReference>
<dbReference type="PDB" id="3RV8">
    <property type="method" value="X-ray"/>
    <property type="resolution" value="2.29 A"/>
    <property type="chains" value="A/B/C/D=1-450"/>
</dbReference>
<dbReference type="PDB" id="3RV9">
    <property type="method" value="X-ray"/>
    <property type="resolution" value="2.14 A"/>
    <property type="chains" value="A/B/C/D=2-450"/>
</dbReference>
<dbReference type="PDB" id="3ST6">
    <property type="method" value="X-ray"/>
    <property type="resolution" value="1.75 A"/>
    <property type="chains" value="A/B/C/D=1-450"/>
</dbReference>
<dbReference type="PDB" id="3VEH">
    <property type="method" value="X-ray"/>
    <property type="resolution" value="2.00 A"/>
    <property type="chains" value="A/B/C/D=1-449"/>
</dbReference>
<dbReference type="PDB" id="6ZA4">
    <property type="method" value="X-ray"/>
    <property type="resolution" value="2.09 A"/>
    <property type="chains" value="A/B/C/D=1-450"/>
</dbReference>
<dbReference type="PDB" id="6ZA5">
    <property type="method" value="X-ray"/>
    <property type="resolution" value="2.11 A"/>
    <property type="chains" value="A/B/C/D=1-450"/>
</dbReference>
<dbReference type="PDB" id="6ZA6">
    <property type="method" value="X-ray"/>
    <property type="resolution" value="1.80 A"/>
    <property type="chains" value="A/B/C/D=1-450"/>
</dbReference>
<dbReference type="PDB" id="8QC4">
    <property type="method" value="X-ray"/>
    <property type="resolution" value="1.58 A"/>
    <property type="chains" value="A/B=1-450"/>
</dbReference>
<dbReference type="PDB" id="8QN5">
    <property type="method" value="X-ray"/>
    <property type="resolution" value="1.54 A"/>
    <property type="chains" value="A/B/C/D=1-450"/>
</dbReference>
<dbReference type="PDBsum" id="2G5F"/>
<dbReference type="PDBsum" id="2I6Y"/>
<dbReference type="PDBsum" id="3LOG"/>
<dbReference type="PDBsum" id="3RV6"/>
<dbReference type="PDBsum" id="3RV7"/>
<dbReference type="PDBsum" id="3RV8"/>
<dbReference type="PDBsum" id="3RV9"/>
<dbReference type="PDBsum" id="3ST6"/>
<dbReference type="PDBsum" id="3VEH"/>
<dbReference type="PDBsum" id="6ZA4"/>
<dbReference type="PDBsum" id="6ZA5"/>
<dbReference type="PDBsum" id="6ZA6"/>
<dbReference type="PDBsum" id="8QC4"/>
<dbReference type="PDBsum" id="8QN5"/>
<dbReference type="SMR" id="P9WFX1"/>
<dbReference type="FunCoup" id="P9WFX1">
    <property type="interactions" value="8"/>
</dbReference>
<dbReference type="STRING" id="83332.Rv2386c"/>
<dbReference type="SwissLipids" id="SLP:000001285"/>
<dbReference type="PaxDb" id="83332-Rv2386c"/>
<dbReference type="DNASU" id="885823"/>
<dbReference type="GeneID" id="885823"/>
<dbReference type="KEGG" id="mtu:Rv2386c"/>
<dbReference type="KEGG" id="mtv:RVBD_2386c"/>
<dbReference type="TubercuList" id="Rv2386c"/>
<dbReference type="eggNOG" id="COG1169">
    <property type="taxonomic scope" value="Bacteria"/>
</dbReference>
<dbReference type="InParanoid" id="P9WFX1"/>
<dbReference type="OrthoDB" id="3518032at2"/>
<dbReference type="PhylomeDB" id="P9WFX1"/>
<dbReference type="BRENDA" id="4.2.99.21">
    <property type="organism ID" value="3445"/>
</dbReference>
<dbReference type="BRENDA" id="5.4.4.2">
    <property type="organism ID" value="3445"/>
</dbReference>
<dbReference type="UniPathway" id="UPA00011"/>
<dbReference type="EvolutionaryTrace" id="P9WFX1"/>
<dbReference type="PRO" id="PR:P9WFX1"/>
<dbReference type="Proteomes" id="UP000001584">
    <property type="component" value="Chromosome"/>
</dbReference>
<dbReference type="GO" id="GO:0005886">
    <property type="term" value="C:plasma membrane"/>
    <property type="evidence" value="ECO:0007005"/>
    <property type="project" value="MTBBASE"/>
</dbReference>
<dbReference type="GO" id="GO:0004106">
    <property type="term" value="F:chorismate mutase activity"/>
    <property type="evidence" value="ECO:0000314"/>
    <property type="project" value="MTBBASE"/>
</dbReference>
<dbReference type="GO" id="GO:0043904">
    <property type="term" value="F:isochorismate pyruvate lyase activity"/>
    <property type="evidence" value="ECO:0000314"/>
    <property type="project" value="MTBBASE"/>
</dbReference>
<dbReference type="GO" id="GO:0008909">
    <property type="term" value="F:isochorismate synthase activity"/>
    <property type="evidence" value="ECO:0000314"/>
    <property type="project" value="MTBBASE"/>
</dbReference>
<dbReference type="GO" id="GO:0000287">
    <property type="term" value="F:magnesium ion binding"/>
    <property type="evidence" value="ECO:0000314"/>
    <property type="project" value="MTBBASE"/>
</dbReference>
<dbReference type="GO" id="GO:0016833">
    <property type="term" value="F:oxo-acid-lyase activity"/>
    <property type="evidence" value="ECO:0007669"/>
    <property type="project" value="InterPro"/>
</dbReference>
<dbReference type="GO" id="GO:0019540">
    <property type="term" value="P:catechol-containing siderophore biosynthetic process"/>
    <property type="evidence" value="ECO:0000314"/>
    <property type="project" value="MTBBASE"/>
</dbReference>
<dbReference type="GO" id="GO:0010106">
    <property type="term" value="P:cellular response to iron ion starvation"/>
    <property type="evidence" value="ECO:0000270"/>
    <property type="project" value="MTBBASE"/>
</dbReference>
<dbReference type="GO" id="GO:0044847">
    <property type="term" value="P:iron acquisition from host"/>
    <property type="evidence" value="ECO:0000270"/>
    <property type="project" value="MTBBASE"/>
</dbReference>
<dbReference type="GO" id="GO:0000162">
    <property type="term" value="P:L-tryptophan biosynthetic process"/>
    <property type="evidence" value="ECO:0000318"/>
    <property type="project" value="GO_Central"/>
</dbReference>
<dbReference type="GO" id="GO:0009697">
    <property type="term" value="P:salicylic acid biosynthetic process"/>
    <property type="evidence" value="ECO:0000314"/>
    <property type="project" value="MTBBASE"/>
</dbReference>
<dbReference type="FunFam" id="3.60.120.10:FF:000010">
    <property type="entry name" value="Salicylate synthase"/>
    <property type="match status" value="1"/>
</dbReference>
<dbReference type="Gene3D" id="3.60.120.10">
    <property type="entry name" value="Anthranilate synthase"/>
    <property type="match status" value="1"/>
</dbReference>
<dbReference type="InterPro" id="IPR005801">
    <property type="entry name" value="ADC_synthase"/>
</dbReference>
<dbReference type="InterPro" id="IPR019999">
    <property type="entry name" value="Anth_synth_I-like"/>
</dbReference>
<dbReference type="InterPro" id="IPR015890">
    <property type="entry name" value="Chorismate_C"/>
</dbReference>
<dbReference type="InterPro" id="IPR019996">
    <property type="entry name" value="Salicylate_synthase"/>
</dbReference>
<dbReference type="NCBIfam" id="TIGR03494">
    <property type="entry name" value="salicyl_syn"/>
    <property type="match status" value="1"/>
</dbReference>
<dbReference type="PANTHER" id="PTHR11236">
    <property type="entry name" value="AMINOBENZOATE/ANTHRANILATE SYNTHASE"/>
    <property type="match status" value="1"/>
</dbReference>
<dbReference type="PANTHER" id="PTHR11236:SF48">
    <property type="entry name" value="ISOCHORISMATE SYNTHASE MENF"/>
    <property type="match status" value="1"/>
</dbReference>
<dbReference type="Pfam" id="PF00425">
    <property type="entry name" value="Chorismate_bind"/>
    <property type="match status" value="1"/>
</dbReference>
<dbReference type="PRINTS" id="PR00095">
    <property type="entry name" value="ANTSNTHASEI"/>
</dbReference>
<dbReference type="SUPFAM" id="SSF56322">
    <property type="entry name" value="ADC synthase"/>
    <property type="match status" value="1"/>
</dbReference>
<reference key="1">
    <citation type="journal article" date="1998" name="Nature">
        <title>Deciphering the biology of Mycobacterium tuberculosis from the complete genome sequence.</title>
        <authorList>
            <person name="Cole S.T."/>
            <person name="Brosch R."/>
            <person name="Parkhill J."/>
            <person name="Garnier T."/>
            <person name="Churcher C.M."/>
            <person name="Harris D.E."/>
            <person name="Gordon S.V."/>
            <person name="Eiglmeier K."/>
            <person name="Gas S."/>
            <person name="Barry C.E. III"/>
            <person name="Tekaia F."/>
            <person name="Badcock K."/>
            <person name="Basham D."/>
            <person name="Brown D."/>
            <person name="Chillingworth T."/>
            <person name="Connor R."/>
            <person name="Davies R.M."/>
            <person name="Devlin K."/>
            <person name="Feltwell T."/>
            <person name="Gentles S."/>
            <person name="Hamlin N."/>
            <person name="Holroyd S."/>
            <person name="Hornsby T."/>
            <person name="Jagels K."/>
            <person name="Krogh A."/>
            <person name="McLean J."/>
            <person name="Moule S."/>
            <person name="Murphy L.D."/>
            <person name="Oliver S."/>
            <person name="Osborne J."/>
            <person name="Quail M.A."/>
            <person name="Rajandream M.A."/>
            <person name="Rogers J."/>
            <person name="Rutter S."/>
            <person name="Seeger K."/>
            <person name="Skelton S."/>
            <person name="Squares S."/>
            <person name="Squares R."/>
            <person name="Sulston J.E."/>
            <person name="Taylor K."/>
            <person name="Whitehead S."/>
            <person name="Barrell B.G."/>
        </authorList>
    </citation>
    <scope>NUCLEOTIDE SEQUENCE [LARGE SCALE GENOMIC DNA]</scope>
    <source>
        <strain>ATCC 25618 / H37Rv</strain>
    </source>
</reference>
<reference key="2">
    <citation type="journal article" date="1998" name="Chem. Biol.">
        <title>Identification of a Mycobacterium tuberculosis gene cluster encoding the biosynthetic enzymes for assembly of the virulence-conferring siderophore mycobactin.</title>
        <authorList>
            <person name="Quadri L.E.N."/>
            <person name="Sello J."/>
            <person name="Keating T.A."/>
            <person name="Weinreb P.H."/>
            <person name="Walsh C.T."/>
        </authorList>
    </citation>
    <scope>FUNCTION</scope>
    <scope>PATHWAY</scope>
</reference>
<reference key="3">
    <citation type="journal article" date="2001" name="Mol. Microbiol.">
        <title>The Mycobacterium tuberculosis IdeR is a dual functional regulator that controls transcription of genes involved in iron acquisition, iron storage and survival in macrophages.</title>
        <authorList>
            <person name="Gold B."/>
            <person name="Rodriguez G.M."/>
            <person name="Marras S.A.E."/>
            <person name="Pentecost M."/>
            <person name="Smith I."/>
        </authorList>
    </citation>
    <scope>INDUCTION</scope>
    <source>
        <strain>ATCC 25618 / H37Rv</strain>
    </source>
</reference>
<reference key="4">
    <citation type="journal article" date="2005" name="Acta Crystallogr. F">
        <title>Crystallization and preliminary X-ray crystallographic analysis of MbtI, a protein essential for siderophore biosynthesis in Mycobacterium tuberculosis.</title>
        <authorList>
            <person name="Harrison A.J."/>
            <person name="Ramsay R.J."/>
            <person name="Baker E.N."/>
            <person name="Lott J.S."/>
        </authorList>
    </citation>
    <scope>CRYSTALLIZATION</scope>
    <scope>SUBUNIT</scope>
</reference>
<reference key="5">
    <citation type="journal article" date="2010" name="FEMS Microbiol. Lett.">
        <title>Roles of trpE2, entC and entD in salicylic acid biosynthesis in Mycobacterium smegmatis.</title>
        <authorList>
            <person name="Nagachar N."/>
            <person name="Ratledge C."/>
        </authorList>
    </citation>
    <scope>FUNCTION</scope>
    <scope>DISRUPTION PHENOTYPE</scope>
</reference>
<reference key="6">
    <citation type="journal article" date="2011" name="Mol. Cell. Proteomics">
        <title>Proteogenomic analysis of Mycobacterium tuberculosis by high resolution mass spectrometry.</title>
        <authorList>
            <person name="Kelkar D.S."/>
            <person name="Kumar D."/>
            <person name="Kumar P."/>
            <person name="Balakrishnan L."/>
            <person name="Muthusamy B."/>
            <person name="Yadav A.K."/>
            <person name="Shrivastava P."/>
            <person name="Marimuthu A."/>
            <person name="Anand S."/>
            <person name="Sundaram H."/>
            <person name="Kingsbury R."/>
            <person name="Harsha H.C."/>
            <person name="Nair B."/>
            <person name="Prasad T.S."/>
            <person name="Chauhan D.S."/>
            <person name="Katoch K."/>
            <person name="Katoch V.M."/>
            <person name="Kumar P."/>
            <person name="Chaerkady R."/>
            <person name="Ramachandran S."/>
            <person name="Dash D."/>
            <person name="Pandey A."/>
        </authorList>
    </citation>
    <scope>IDENTIFICATION BY MASS SPECTROMETRY [LARGE SCALE ANALYSIS]</scope>
    <source>
        <strain>ATCC 25618 / H37Rv</strain>
    </source>
</reference>
<reference key="7">
    <citation type="journal article" date="2006" name="J. Bacteriol.">
        <title>The structure of MbtI from Mycobacterium tuberculosis, the first enzyme in the biosynthesis of the siderophore mycobactin, reveals it to be a salicylate synthase.</title>
        <authorList>
            <person name="Harrison A.J."/>
            <person name="Yu M."/>
            <person name="Gardenborg T."/>
            <person name="Middleditch M."/>
            <person name="Ramsay R.J."/>
            <person name="Baker E.N."/>
            <person name="Lott J.S."/>
        </authorList>
    </citation>
    <scope>X-RAY CRYSTALLOGRAPHY (1.8 ANGSTROMS) IN COMPLEX WITH SUBSTRATE</scope>
    <scope>FUNCTION</scope>
    <scope>CATALYTIC ACTIVITY</scope>
    <scope>SUBUNIT</scope>
    <scope>COFACTOR</scope>
    <source>
        <strain>ATCC 25618 / H37Rv</strain>
    </source>
</reference>
<reference key="8">
    <citation type="journal article" date="2007" name="Biochemistry">
        <title>Structure and mechanism of MbtI, the salicylate synthase from Mycobacterium tuberculosis.</title>
        <authorList>
            <person name="Zwahlen J."/>
            <person name="Kolappan S."/>
            <person name="Zhou R."/>
            <person name="Kisker C."/>
            <person name="Tonge P.J."/>
        </authorList>
    </citation>
    <scope>X-RAY CRYSTALLOGRAPHY (2.5 ANGSTROMS)</scope>
    <scope>FUNCTION</scope>
    <scope>CATALYTIC ACTIVITY</scope>
    <scope>MUTAGENESIS OF LYS-205; GLU-252; LEU-268; THR-271; HIS-334 AND ARG-405</scope>
    <scope>BIOPHYSICOCHEMICAL PROPERTIES</scope>
    <scope>COFACTOR</scope>
    <scope>SUBUNIT</scope>
</reference>
<reference key="9">
    <citation type="journal article" date="2010" name="ChemMedChem">
        <title>Inhibition studies of Mycobacterium tuberculosis salicylate synthase (MbtI).</title>
        <authorList>
            <person name="Manos-Turvey A."/>
            <person name="Bulloch E.M."/>
            <person name="Rutledge P.J."/>
            <person name="Baker E.N."/>
            <person name="Lott J.S."/>
            <person name="Payne R.J."/>
        </authorList>
    </citation>
    <scope>X-RAY CRYSTALLOGRAPHY (1.73 ANGSTROMS) IN COMPLEX WITH SUBSTRATE ANALOGS AND MAGNESIUM ION</scope>
    <scope>FUNCTION</scope>
    <scope>CATALYTIC ACTIVITY</scope>
    <scope>BIOPHYSICOCHEMICAL PROPERTIES</scope>
    <scope>ACTIVITY REGULATION</scope>
    <scope>SUBUNIT</scope>
</reference>
<reference key="10">
    <citation type="journal article" date="2012" name="Biochemistry">
        <title>Implications of binding mode and active site flexibility for inhibitor potency against the salicylate synthase from Mycobacterium tuberculosis.</title>
        <authorList>
            <person name="Chi G."/>
            <person name="Manos-Turvey A."/>
            <person name="O'Connor P.D."/>
            <person name="Johnston J.M."/>
            <person name="Evans G.L."/>
            <person name="Baker E.N."/>
            <person name="Payne R.J."/>
            <person name="Lott J.S."/>
            <person name="Bulloch E.M."/>
        </authorList>
    </citation>
    <scope>X-RAY CRYSTALLOGRAPHY (1.75 ANGSTROMS) IN COMPLEX WITH SUBSTRATE ANALOGS</scope>
    <scope>ACTIVITY REGULATION</scope>
    <scope>SUBUNIT</scope>
</reference>